<organism>
    <name type="scientific">Saccharophagus degradans (strain 2-40 / ATCC 43961 / DSM 17024)</name>
    <dbReference type="NCBI Taxonomy" id="203122"/>
    <lineage>
        <taxon>Bacteria</taxon>
        <taxon>Pseudomonadati</taxon>
        <taxon>Pseudomonadota</taxon>
        <taxon>Gammaproteobacteria</taxon>
        <taxon>Cellvibrionales</taxon>
        <taxon>Cellvibrionaceae</taxon>
        <taxon>Saccharophagus</taxon>
    </lineage>
</organism>
<comment type="function">
    <text evidence="1">DNA-dependent RNA polymerase catalyzes the transcription of DNA into RNA using the four ribonucleoside triphosphates as substrates.</text>
</comment>
<comment type="catalytic activity">
    <reaction evidence="1">
        <text>RNA(n) + a ribonucleoside 5'-triphosphate = RNA(n+1) + diphosphate</text>
        <dbReference type="Rhea" id="RHEA:21248"/>
        <dbReference type="Rhea" id="RHEA-COMP:14527"/>
        <dbReference type="Rhea" id="RHEA-COMP:17342"/>
        <dbReference type="ChEBI" id="CHEBI:33019"/>
        <dbReference type="ChEBI" id="CHEBI:61557"/>
        <dbReference type="ChEBI" id="CHEBI:140395"/>
        <dbReference type="EC" id="2.7.7.6"/>
    </reaction>
</comment>
<comment type="cofactor">
    <cofactor evidence="1">
        <name>Mg(2+)</name>
        <dbReference type="ChEBI" id="CHEBI:18420"/>
    </cofactor>
    <text evidence="1">Binds 1 Mg(2+) ion per subunit.</text>
</comment>
<comment type="cofactor">
    <cofactor evidence="1">
        <name>Zn(2+)</name>
        <dbReference type="ChEBI" id="CHEBI:29105"/>
    </cofactor>
    <text evidence="1">Binds 2 Zn(2+) ions per subunit.</text>
</comment>
<comment type="subunit">
    <text evidence="1">The RNAP catalytic core consists of 2 alpha, 1 beta, 1 beta' and 1 omega subunit. When a sigma factor is associated with the core the holoenzyme is formed, which can initiate transcription.</text>
</comment>
<comment type="similarity">
    <text evidence="1">Belongs to the RNA polymerase beta' chain family.</text>
</comment>
<keyword id="KW-0240">DNA-directed RNA polymerase</keyword>
<keyword id="KW-0460">Magnesium</keyword>
<keyword id="KW-0479">Metal-binding</keyword>
<keyword id="KW-0548">Nucleotidyltransferase</keyword>
<keyword id="KW-1185">Reference proteome</keyword>
<keyword id="KW-0804">Transcription</keyword>
<keyword id="KW-0808">Transferase</keyword>
<keyword id="KW-0862">Zinc</keyword>
<gene>
    <name evidence="1" type="primary">rpoC</name>
    <name type="ordered locus">Sde_0925</name>
</gene>
<evidence type="ECO:0000255" key="1">
    <source>
        <dbReference type="HAMAP-Rule" id="MF_01322"/>
    </source>
</evidence>
<dbReference type="EC" id="2.7.7.6" evidence="1"/>
<dbReference type="EMBL" id="CP000282">
    <property type="protein sequence ID" value="ABD80187.1"/>
    <property type="molecule type" value="Genomic_DNA"/>
</dbReference>
<dbReference type="RefSeq" id="WP_011467408.1">
    <property type="nucleotide sequence ID" value="NC_007912.1"/>
</dbReference>
<dbReference type="SMR" id="Q21M92"/>
<dbReference type="STRING" id="203122.Sde_0925"/>
<dbReference type="GeneID" id="98612611"/>
<dbReference type="KEGG" id="sde:Sde_0925"/>
<dbReference type="eggNOG" id="COG0086">
    <property type="taxonomic scope" value="Bacteria"/>
</dbReference>
<dbReference type="HOGENOM" id="CLU_000524_3_1_6"/>
<dbReference type="OrthoDB" id="9815296at2"/>
<dbReference type="Proteomes" id="UP000001947">
    <property type="component" value="Chromosome"/>
</dbReference>
<dbReference type="GO" id="GO:0000428">
    <property type="term" value="C:DNA-directed RNA polymerase complex"/>
    <property type="evidence" value="ECO:0007669"/>
    <property type="project" value="UniProtKB-KW"/>
</dbReference>
<dbReference type="GO" id="GO:0003677">
    <property type="term" value="F:DNA binding"/>
    <property type="evidence" value="ECO:0007669"/>
    <property type="project" value="UniProtKB-UniRule"/>
</dbReference>
<dbReference type="GO" id="GO:0003899">
    <property type="term" value="F:DNA-directed RNA polymerase activity"/>
    <property type="evidence" value="ECO:0007669"/>
    <property type="project" value="UniProtKB-UniRule"/>
</dbReference>
<dbReference type="GO" id="GO:0000287">
    <property type="term" value="F:magnesium ion binding"/>
    <property type="evidence" value="ECO:0007669"/>
    <property type="project" value="UniProtKB-UniRule"/>
</dbReference>
<dbReference type="GO" id="GO:0008270">
    <property type="term" value="F:zinc ion binding"/>
    <property type="evidence" value="ECO:0007669"/>
    <property type="project" value="UniProtKB-UniRule"/>
</dbReference>
<dbReference type="GO" id="GO:0006351">
    <property type="term" value="P:DNA-templated transcription"/>
    <property type="evidence" value="ECO:0007669"/>
    <property type="project" value="UniProtKB-UniRule"/>
</dbReference>
<dbReference type="CDD" id="cd02655">
    <property type="entry name" value="RNAP_beta'_C"/>
    <property type="match status" value="1"/>
</dbReference>
<dbReference type="CDD" id="cd01609">
    <property type="entry name" value="RNAP_beta'_N"/>
    <property type="match status" value="1"/>
</dbReference>
<dbReference type="FunFam" id="1.10.132.30:FF:000003">
    <property type="entry name" value="DNA-directed RNA polymerase subunit beta"/>
    <property type="match status" value="1"/>
</dbReference>
<dbReference type="FunFam" id="1.10.150.390:FF:000002">
    <property type="entry name" value="DNA-directed RNA polymerase subunit beta"/>
    <property type="match status" value="1"/>
</dbReference>
<dbReference type="FunFam" id="1.10.40.90:FF:000001">
    <property type="entry name" value="DNA-directed RNA polymerase subunit beta"/>
    <property type="match status" value="1"/>
</dbReference>
<dbReference type="FunFam" id="4.10.860.120:FF:000001">
    <property type="entry name" value="DNA-directed RNA polymerase subunit beta"/>
    <property type="match status" value="1"/>
</dbReference>
<dbReference type="Gene3D" id="1.10.132.30">
    <property type="match status" value="1"/>
</dbReference>
<dbReference type="Gene3D" id="1.10.150.390">
    <property type="match status" value="1"/>
</dbReference>
<dbReference type="Gene3D" id="1.10.1790.20">
    <property type="match status" value="1"/>
</dbReference>
<dbReference type="Gene3D" id="1.10.40.90">
    <property type="match status" value="1"/>
</dbReference>
<dbReference type="Gene3D" id="2.40.40.20">
    <property type="match status" value="1"/>
</dbReference>
<dbReference type="Gene3D" id="2.40.50.100">
    <property type="match status" value="3"/>
</dbReference>
<dbReference type="Gene3D" id="4.10.860.120">
    <property type="entry name" value="RNA polymerase II, clamp domain"/>
    <property type="match status" value="1"/>
</dbReference>
<dbReference type="Gene3D" id="1.10.274.100">
    <property type="entry name" value="RNA polymerase Rpb1, domain 3"/>
    <property type="match status" value="1"/>
</dbReference>
<dbReference type="HAMAP" id="MF_01322">
    <property type="entry name" value="RNApol_bact_RpoC"/>
    <property type="match status" value="1"/>
</dbReference>
<dbReference type="InterPro" id="IPR045867">
    <property type="entry name" value="DNA-dir_RpoC_beta_prime"/>
</dbReference>
<dbReference type="InterPro" id="IPR012754">
    <property type="entry name" value="DNA-dir_RpoC_beta_prime_bact"/>
</dbReference>
<dbReference type="InterPro" id="IPR000722">
    <property type="entry name" value="RNA_pol_asu"/>
</dbReference>
<dbReference type="InterPro" id="IPR006592">
    <property type="entry name" value="RNA_pol_N"/>
</dbReference>
<dbReference type="InterPro" id="IPR007080">
    <property type="entry name" value="RNA_pol_Rpb1_1"/>
</dbReference>
<dbReference type="InterPro" id="IPR007066">
    <property type="entry name" value="RNA_pol_Rpb1_3"/>
</dbReference>
<dbReference type="InterPro" id="IPR042102">
    <property type="entry name" value="RNA_pol_Rpb1_3_sf"/>
</dbReference>
<dbReference type="InterPro" id="IPR007083">
    <property type="entry name" value="RNA_pol_Rpb1_4"/>
</dbReference>
<dbReference type="InterPro" id="IPR007081">
    <property type="entry name" value="RNA_pol_Rpb1_5"/>
</dbReference>
<dbReference type="InterPro" id="IPR044893">
    <property type="entry name" value="RNA_pol_Rpb1_clamp_domain"/>
</dbReference>
<dbReference type="InterPro" id="IPR038120">
    <property type="entry name" value="Rpb1_funnel_sf"/>
</dbReference>
<dbReference type="NCBIfam" id="TIGR02386">
    <property type="entry name" value="rpoC_TIGR"/>
    <property type="match status" value="1"/>
</dbReference>
<dbReference type="PANTHER" id="PTHR19376">
    <property type="entry name" value="DNA-DIRECTED RNA POLYMERASE"/>
    <property type="match status" value="1"/>
</dbReference>
<dbReference type="PANTHER" id="PTHR19376:SF54">
    <property type="entry name" value="DNA-DIRECTED RNA POLYMERASE SUBUNIT BETA"/>
    <property type="match status" value="1"/>
</dbReference>
<dbReference type="Pfam" id="PF04997">
    <property type="entry name" value="RNA_pol_Rpb1_1"/>
    <property type="match status" value="1"/>
</dbReference>
<dbReference type="Pfam" id="PF00623">
    <property type="entry name" value="RNA_pol_Rpb1_2"/>
    <property type="match status" value="1"/>
</dbReference>
<dbReference type="Pfam" id="PF04983">
    <property type="entry name" value="RNA_pol_Rpb1_3"/>
    <property type="match status" value="1"/>
</dbReference>
<dbReference type="Pfam" id="PF05000">
    <property type="entry name" value="RNA_pol_Rpb1_4"/>
    <property type="match status" value="1"/>
</dbReference>
<dbReference type="Pfam" id="PF04998">
    <property type="entry name" value="RNA_pol_Rpb1_5"/>
    <property type="match status" value="1"/>
</dbReference>
<dbReference type="SMART" id="SM00663">
    <property type="entry name" value="RPOLA_N"/>
    <property type="match status" value="1"/>
</dbReference>
<dbReference type="SUPFAM" id="SSF64484">
    <property type="entry name" value="beta and beta-prime subunits of DNA dependent RNA-polymerase"/>
    <property type="match status" value="1"/>
</dbReference>
<proteinExistence type="inferred from homology"/>
<feature type="chain" id="PRO_0000240822" description="DNA-directed RNA polymerase subunit beta'">
    <location>
        <begin position="1"/>
        <end position="1410"/>
    </location>
</feature>
<feature type="binding site" evidence="1">
    <location>
        <position position="70"/>
    </location>
    <ligand>
        <name>Zn(2+)</name>
        <dbReference type="ChEBI" id="CHEBI:29105"/>
        <label>1</label>
    </ligand>
</feature>
<feature type="binding site" evidence="1">
    <location>
        <position position="72"/>
    </location>
    <ligand>
        <name>Zn(2+)</name>
        <dbReference type="ChEBI" id="CHEBI:29105"/>
        <label>1</label>
    </ligand>
</feature>
<feature type="binding site" evidence="1">
    <location>
        <position position="85"/>
    </location>
    <ligand>
        <name>Zn(2+)</name>
        <dbReference type="ChEBI" id="CHEBI:29105"/>
        <label>1</label>
    </ligand>
</feature>
<feature type="binding site" evidence="1">
    <location>
        <position position="88"/>
    </location>
    <ligand>
        <name>Zn(2+)</name>
        <dbReference type="ChEBI" id="CHEBI:29105"/>
        <label>1</label>
    </ligand>
</feature>
<feature type="binding site" evidence="1">
    <location>
        <position position="460"/>
    </location>
    <ligand>
        <name>Mg(2+)</name>
        <dbReference type="ChEBI" id="CHEBI:18420"/>
    </ligand>
</feature>
<feature type="binding site" evidence="1">
    <location>
        <position position="462"/>
    </location>
    <ligand>
        <name>Mg(2+)</name>
        <dbReference type="ChEBI" id="CHEBI:18420"/>
    </ligand>
</feature>
<feature type="binding site" evidence="1">
    <location>
        <position position="464"/>
    </location>
    <ligand>
        <name>Mg(2+)</name>
        <dbReference type="ChEBI" id="CHEBI:18420"/>
    </ligand>
</feature>
<feature type="binding site" evidence="1">
    <location>
        <position position="814"/>
    </location>
    <ligand>
        <name>Zn(2+)</name>
        <dbReference type="ChEBI" id="CHEBI:29105"/>
        <label>2</label>
    </ligand>
</feature>
<feature type="binding site" evidence="1">
    <location>
        <position position="888"/>
    </location>
    <ligand>
        <name>Zn(2+)</name>
        <dbReference type="ChEBI" id="CHEBI:29105"/>
        <label>2</label>
    </ligand>
</feature>
<feature type="binding site" evidence="1">
    <location>
        <position position="895"/>
    </location>
    <ligand>
        <name>Zn(2+)</name>
        <dbReference type="ChEBI" id="CHEBI:29105"/>
        <label>2</label>
    </ligand>
</feature>
<feature type="binding site" evidence="1">
    <location>
        <position position="898"/>
    </location>
    <ligand>
        <name>Zn(2+)</name>
        <dbReference type="ChEBI" id="CHEBI:29105"/>
        <label>2</label>
    </ligand>
</feature>
<reference key="1">
    <citation type="journal article" date="2008" name="PLoS Genet.">
        <title>Complete genome sequence of the complex carbohydrate-degrading marine bacterium, Saccharophagus degradans strain 2-40 T.</title>
        <authorList>
            <person name="Weiner R.M."/>
            <person name="Taylor L.E. II"/>
            <person name="Henrissat B."/>
            <person name="Hauser L."/>
            <person name="Land M."/>
            <person name="Coutinho P.M."/>
            <person name="Rancurel C."/>
            <person name="Saunders E.H."/>
            <person name="Longmire A.G."/>
            <person name="Zhang H."/>
            <person name="Bayer E.A."/>
            <person name="Gilbert H.J."/>
            <person name="Larimer F."/>
            <person name="Zhulin I.B."/>
            <person name="Ekborg N.A."/>
            <person name="Lamed R."/>
            <person name="Richardson P.M."/>
            <person name="Borovok I."/>
            <person name="Hutcheson S."/>
        </authorList>
    </citation>
    <scope>NUCLEOTIDE SEQUENCE [LARGE SCALE GENOMIC DNA]</scope>
    <source>
        <strain>2-40 / ATCC 43961 / DSM 17024</strain>
    </source>
</reference>
<sequence>MKDLLNLLKNQGPSDEFDGIRIGLASPDMIRSWSYGEVKKPETINYRTFKPEREGLFCAKVFGPVKDYECLCGKYKRMKHRGIICEKCGVEVTLAKVRRDRMAHIELASPVAHIWFLKSLPSRIGLLLDMTLRSIERVLYFESYVVTDPGMTTLEKGQLLTDEQYFEAMEEFGDEFEAKMGAEAIQQLMKDIELEREAQEIREQIPNTNSETKIKKLSKRLKLLEAFIQSGNKPEWMVLEALPVLPPDLRPLVPLDGGRFATSDLNDLYRRVINRNNRLKRLLDLNAPDIIVRNEKRMLQESVDALLDNGRRGRAITGSNKRPLKSLADMIKGKQGRFRQNLLGKRVDYSGRSVIVTGPTLRLHQCGLPKKMALELFKPFIFSKLELRGLATTIKAAKKMVEREEPVVWDILDEVIREHPVLLNRAPTLHRLGIQAFEPVLIEGKAIQLHPLVCAAYNADFDGDQMAVHVPLTLEAQLEARALMMSTNNILSPASGEPIIVPSQDVVLGLYWMTRERVNDKGEGMIFSDIKEVSRAFYSKQVGLQARIKVRIDETIMEESGESESSYRMVDTTVGRMLLWEIVPKGIPFEMINKPMVKKAISAVINFCYRIVGLKATVIFADQLMYMGYDFSTKSGSSIGVNDFEIPEAKAGMIERADAEVKEIEAQYASGLVAQGEKYNKVIDIWSRANDLVAKSMMEGISKETVKNKQGEDEEQASFNSVFMYADSGARGSPAQIRQLAGMRGLMARPDGSIIETPITANFREGLNVLQYFISTHGARKGLADTALKTANSGYLTRRLVDVAQDVVITEQDCGTDEGLSMTPVIEGGDVIESLGDRILGRVVARDVIRPNSDEILVPAGTMIDEKWVERIESMGIDEVTVRSAISCDAVFGICAQCYGRDLARGHRANVGEAIGVIAAQSIGEPGTQLTMRTFHIGGAASRASAADSVEVKQEGTVRLHNIKVVARESGELIAVSRSGELALADAAGRERERYKIPYGAVITVKEGEQVKGGSIIAKWDPHTHPIVTEVAGRVVLAGMEDGLSIRKQTDELTGLTTIEILDPSERPSAGKDLKPAVTLVDENGNELKLANSEQPAHYMLPGKSIFSLKNGDTVGVGDIIARIPQEGSKTRDITGGLPRVADLFEARKPKEPSILAEISGTVSFGKETKGKRRLVITPPNGAVLEDGSTHYEVLIPKHRHLTVFEGETVAKGEVVSDGPSNPHDILRLKGVEALANYITNEIQDVYRLQGVKINDKHVEVIVRQMLRKVEITGMGDSSFVKGEQVEYIAVLQENEKLRAEGRQPARFERQLLGITKASLATESFISAASFQETTRVLTEASVTGKIDNLRGLKENVVVGRLIPAGTGLAYHAERRRKREDQAGSKAGSDTVSAAEIEAALTEALKSSAS</sequence>
<name>RPOC_SACD2</name>
<accession>Q21M92</accession>
<protein>
    <recommendedName>
        <fullName evidence="1">DNA-directed RNA polymerase subunit beta'</fullName>
        <shortName evidence="1">RNAP subunit beta'</shortName>
        <ecNumber evidence="1">2.7.7.6</ecNumber>
    </recommendedName>
    <alternativeName>
        <fullName evidence="1">RNA polymerase subunit beta'</fullName>
    </alternativeName>
    <alternativeName>
        <fullName evidence="1">Transcriptase subunit beta'</fullName>
    </alternativeName>
</protein>